<organismHost>
    <name type="scientific">Homo sapiens</name>
    <name type="common">Human</name>
    <dbReference type="NCBI Taxonomy" id="9606"/>
</organismHost>
<reference key="1">
    <citation type="journal article" date="1993" name="Nature">
        <title>Potential virulence determinants in terminal regions of variola smallpox virus genome.</title>
        <authorList>
            <person name="Massung R.F."/>
            <person name="Esposito J.J."/>
            <person name="Liu L.I."/>
            <person name="Qi J."/>
            <person name="Utterback T.R."/>
            <person name="Knight J.C."/>
            <person name="Aubin L."/>
            <person name="Yuran T.E."/>
            <person name="Parsons J.M."/>
            <person name="Loparev V.N."/>
            <person name="Selivanov N.A."/>
            <person name="Cavallaro K.F."/>
            <person name="Kerlavage A.R."/>
            <person name="Mahy B.W.J."/>
            <person name="Venter J.C."/>
        </authorList>
    </citation>
    <scope>NUCLEOTIDE SEQUENCE [GENOMIC DNA]</scope>
    <source>
        <strain>Bangladesh-1975</strain>
    </source>
</reference>
<name>VTF3S_VARV</name>
<gene>
    <name type="primary">OPG134</name>
    <name type="synonym">VITF3S</name>
    <name type="ORF">A8R</name>
</gene>
<proteinExistence type="evidence at transcript level"/>
<feature type="chain" id="PRO_0000448140" description="Intermediate transcription factor 3 small subunit">
    <location>
        <begin position="1"/>
        <end position="288"/>
    </location>
</feature>
<sequence length="288" mass="33554">MFEPVPDLNLEASVELGEVNIDQTTPMIKENIGFISRSRRLFAHRSKDDERKLALRFFLQRLYFLDHREIHYLFRCVDAVKDVTITKKNNIIVAPYIALLTIASKGCKLTETMIEAFFPELYNEHSKKFKFNSQVSIIQEKLGYQSGNYHVYDFEPYYSTVALAIRDEHSSGIFNIRQESYLVSSLSEITYRFYLINLKSDLVQWSASTGAVINQMVNTVLITVYEKLQLVIENDSQFICSLAVESELPIKLLKDRNELFTKFINELKKTSSFKISKRDKDTLLKYFT</sequence>
<dbReference type="EMBL" id="L22579">
    <property type="protein sequence ID" value="AAA60860.1"/>
    <property type="molecule type" value="Genomic_DNA"/>
</dbReference>
<dbReference type="PIR" id="T28550">
    <property type="entry name" value="T28550"/>
</dbReference>
<dbReference type="RefSeq" id="NP_042156.1">
    <property type="nucleotide sequence ID" value="NC_001611.1"/>
</dbReference>
<dbReference type="SMR" id="P0DSQ0"/>
<dbReference type="GeneID" id="1486538"/>
<dbReference type="KEGG" id="vg:1486538"/>
<dbReference type="Proteomes" id="UP000119805">
    <property type="component" value="Segment"/>
</dbReference>
<dbReference type="InterPro" id="IPR006834">
    <property type="entry name" value="Pox_A8"/>
</dbReference>
<dbReference type="Pfam" id="PF04745">
    <property type="entry name" value="Pox_A8"/>
    <property type="match status" value="1"/>
</dbReference>
<comment type="function">
    <text evidence="1">Acts with RNA polymerase to initiate transcription from intermediate gene promoters.</text>
</comment>
<comment type="subunit">
    <text evidence="1">Heterodimer of a 45 kDa (A23R) and a 32 kDa (A8R) subunit to form the virus intermediate transcription factor (VITF)-3.</text>
</comment>
<comment type="induction">
    <text>Expressed in the early phase of the viral replicative cycle.</text>
</comment>
<comment type="similarity">
    <text evidence="2">Belongs to the orthopoxvirus OPG134 family.</text>
</comment>
<protein>
    <recommendedName>
        <fullName>Intermediate transcription factor 3 small subunit</fullName>
    </recommendedName>
    <alternativeName>
        <fullName>VITF-3 32 kDa subunit</fullName>
    </alternativeName>
    <alternativeName>
        <fullName>VITF-3 small subunit</fullName>
    </alternativeName>
</protein>
<keyword id="KW-0010">Activator</keyword>
<keyword id="KW-0244">Early protein</keyword>
<keyword id="KW-0804">Transcription</keyword>
<keyword id="KW-0805">Transcription regulation</keyword>
<accession>P0DSQ0</accession>
<accession>P33834</accession>
<organism>
    <name type="scientific">Variola virus</name>
    <dbReference type="NCBI Taxonomy" id="10255"/>
    <lineage>
        <taxon>Viruses</taxon>
        <taxon>Varidnaviria</taxon>
        <taxon>Bamfordvirae</taxon>
        <taxon>Nucleocytoviricota</taxon>
        <taxon>Pokkesviricetes</taxon>
        <taxon>Chitovirales</taxon>
        <taxon>Poxviridae</taxon>
        <taxon>Chordopoxvirinae</taxon>
        <taxon>Orthopoxvirus</taxon>
    </lineage>
</organism>
<evidence type="ECO:0000250" key="1">
    <source>
        <dbReference type="UniProtKB" id="P68720"/>
    </source>
</evidence>
<evidence type="ECO:0000305" key="2"/>